<protein>
    <recommendedName>
        <fullName>Cytochrome c-type protein NrfB</fullName>
    </recommendedName>
</protein>
<proteinExistence type="inferred from homology"/>
<accession>P0ABL2</accession>
<accession>P32707</accession>
<accession>P76790</accession>
<organism>
    <name type="scientific">Escherichia coli O6:H1 (strain CFT073 / ATCC 700928 / UPEC)</name>
    <dbReference type="NCBI Taxonomy" id="199310"/>
    <lineage>
        <taxon>Bacteria</taxon>
        <taxon>Pseudomonadati</taxon>
        <taxon>Pseudomonadota</taxon>
        <taxon>Gammaproteobacteria</taxon>
        <taxon>Enterobacterales</taxon>
        <taxon>Enterobacteriaceae</taxon>
        <taxon>Escherichia</taxon>
    </lineage>
</organism>
<name>NRFB_ECOL6</name>
<reference key="1">
    <citation type="journal article" date="2002" name="Proc. Natl. Acad. Sci. U.S.A.">
        <title>Extensive mosaic structure revealed by the complete genome sequence of uropathogenic Escherichia coli.</title>
        <authorList>
            <person name="Welch R.A."/>
            <person name="Burland V."/>
            <person name="Plunkett G. III"/>
            <person name="Redford P."/>
            <person name="Roesch P."/>
            <person name="Rasko D."/>
            <person name="Buckles E.L."/>
            <person name="Liou S.-R."/>
            <person name="Boutin A."/>
            <person name="Hackett J."/>
            <person name="Stroud D."/>
            <person name="Mayhew G.F."/>
            <person name="Rose D.J."/>
            <person name="Zhou S."/>
            <person name="Schwartz D.C."/>
            <person name="Perna N.T."/>
            <person name="Mobley H.L.T."/>
            <person name="Donnenberg M.S."/>
            <person name="Blattner F.R."/>
        </authorList>
    </citation>
    <scope>NUCLEOTIDE SEQUENCE [LARGE SCALE GENOMIC DNA]</scope>
    <source>
        <strain>CFT073 / ATCC 700928 / UPEC</strain>
    </source>
</reference>
<sequence length="188" mass="20714">MSVLRSLLTAGVLASGLLWSLNGITATPAAQASDDRYEVTQQRNPDAACLDCHKPDTEGMHGKHASVINPNNKLPVTCTNCHGQPSPQHREGVKDVMRFNEPMYKVGEQNSVCMSCHLPEQLQKAFWPHDVHVTKVACASCHSLHPQQDTMQTLSDKGRIKICVDCHSDQRTNPNFNPASVPLLKEQP</sequence>
<comment type="function">
    <text evidence="1">Plays a role in nitrite reduction.</text>
</comment>
<comment type="pathway">
    <text>Energy metabolism; nitrogen metabolism.</text>
</comment>
<comment type="subcellular location">
    <subcellularLocation>
        <location evidence="3">Periplasm</location>
    </subcellularLocation>
</comment>
<comment type="PTM">
    <text evidence="1">Binds 5 heme groups per subunit.</text>
</comment>
<comment type="sequence caution" evidence="3">
    <conflict type="erroneous initiation">
        <sequence resource="EMBL-CDS" id="AAN83493"/>
    </conflict>
</comment>
<feature type="signal peptide" evidence="2">
    <location>
        <begin position="1"/>
        <end position="32"/>
    </location>
</feature>
<feature type="chain" id="PRO_0000042810" description="Cytochrome c-type protein NrfB">
    <location>
        <begin position="33"/>
        <end position="188"/>
    </location>
</feature>
<feature type="binding site" description="covalent" evidence="1">
    <location>
        <position position="49"/>
    </location>
    <ligand>
        <name>heme</name>
        <dbReference type="ChEBI" id="CHEBI:30413"/>
        <label>1</label>
    </ligand>
</feature>
<feature type="binding site" description="covalent" evidence="1">
    <location>
        <position position="52"/>
    </location>
    <ligand>
        <name>heme</name>
        <dbReference type="ChEBI" id="CHEBI:30413"/>
        <label>1</label>
    </ligand>
</feature>
<feature type="binding site" description="axial binding residue" evidence="1">
    <location>
        <position position="53"/>
    </location>
    <ligand>
        <name>heme</name>
        <dbReference type="ChEBI" id="CHEBI:30413"/>
        <label>1</label>
    </ligand>
    <ligandPart>
        <name>Fe</name>
        <dbReference type="ChEBI" id="CHEBI:18248"/>
    </ligandPart>
</feature>
<feature type="binding site" description="covalent" evidence="1">
    <location>
        <position position="78"/>
    </location>
    <ligand>
        <name>heme</name>
        <dbReference type="ChEBI" id="CHEBI:30413"/>
        <label>2</label>
    </ligand>
</feature>
<feature type="binding site" description="covalent" evidence="1">
    <location>
        <position position="81"/>
    </location>
    <ligand>
        <name>heme</name>
        <dbReference type="ChEBI" id="CHEBI:30413"/>
        <label>2</label>
    </ligand>
</feature>
<feature type="binding site" description="axial binding residue" evidence="1">
    <location>
        <position position="82"/>
    </location>
    <ligand>
        <name>heme</name>
        <dbReference type="ChEBI" id="CHEBI:30413"/>
        <label>2</label>
    </ligand>
    <ligandPart>
        <name>Fe</name>
        <dbReference type="ChEBI" id="CHEBI:18248"/>
    </ligandPart>
</feature>
<feature type="binding site" description="covalent" evidence="1">
    <location>
        <position position="113"/>
    </location>
    <ligand>
        <name>heme</name>
        <dbReference type="ChEBI" id="CHEBI:30413"/>
        <label>3</label>
    </ligand>
</feature>
<feature type="binding site" description="covalent" evidence="1">
    <location>
        <position position="116"/>
    </location>
    <ligand>
        <name>heme</name>
        <dbReference type="ChEBI" id="CHEBI:30413"/>
        <label>3</label>
    </ligand>
</feature>
<feature type="binding site" description="axial binding residue" evidence="1">
    <location>
        <position position="117"/>
    </location>
    <ligand>
        <name>heme</name>
        <dbReference type="ChEBI" id="CHEBI:30413"/>
        <label>3</label>
    </ligand>
    <ligandPart>
        <name>Fe</name>
        <dbReference type="ChEBI" id="CHEBI:18248"/>
    </ligandPart>
</feature>
<feature type="binding site" description="covalent" evidence="1">
    <location>
        <position position="138"/>
    </location>
    <ligand>
        <name>heme</name>
        <dbReference type="ChEBI" id="CHEBI:30413"/>
        <label>4</label>
    </ligand>
</feature>
<feature type="binding site" description="covalent" evidence="1">
    <location>
        <position position="141"/>
    </location>
    <ligand>
        <name>heme</name>
        <dbReference type="ChEBI" id="CHEBI:30413"/>
        <label>4</label>
    </ligand>
</feature>
<feature type="binding site" description="axial binding residue" evidence="1">
    <location>
        <position position="142"/>
    </location>
    <ligand>
        <name>heme</name>
        <dbReference type="ChEBI" id="CHEBI:30413"/>
        <label>4</label>
    </ligand>
    <ligandPart>
        <name>Fe</name>
        <dbReference type="ChEBI" id="CHEBI:18248"/>
    </ligandPart>
</feature>
<feature type="binding site" description="covalent" evidence="1">
    <location>
        <position position="163"/>
    </location>
    <ligand>
        <name>heme</name>
        <dbReference type="ChEBI" id="CHEBI:30413"/>
        <label>5</label>
    </ligand>
</feature>
<feature type="binding site" description="covalent" evidence="1">
    <location>
        <position position="166"/>
    </location>
    <ligand>
        <name>heme</name>
        <dbReference type="ChEBI" id="CHEBI:30413"/>
        <label>5</label>
    </ligand>
</feature>
<feature type="binding site" description="axial binding residue" evidence="1">
    <location>
        <position position="167"/>
    </location>
    <ligand>
        <name>heme</name>
        <dbReference type="ChEBI" id="CHEBI:30413"/>
        <label>5</label>
    </ligand>
    <ligandPart>
        <name>Fe</name>
        <dbReference type="ChEBI" id="CHEBI:18248"/>
    </ligandPart>
</feature>
<gene>
    <name type="primary">nrfB</name>
    <name type="ordered locus">c5067</name>
</gene>
<evidence type="ECO:0000250" key="1"/>
<evidence type="ECO:0000255" key="2"/>
<evidence type="ECO:0000305" key="3"/>
<dbReference type="EMBL" id="AE014075">
    <property type="protein sequence ID" value="AAN83493.1"/>
    <property type="status" value="ALT_INIT"/>
    <property type="molecule type" value="Genomic_DNA"/>
</dbReference>
<dbReference type="RefSeq" id="WP_001295391.1">
    <property type="nucleotide sequence ID" value="NZ_CP051263.1"/>
</dbReference>
<dbReference type="SMR" id="P0ABL2"/>
<dbReference type="STRING" id="199310.c5067"/>
<dbReference type="GeneID" id="93777758"/>
<dbReference type="KEGG" id="ecc:c5067"/>
<dbReference type="eggNOG" id="COG3303">
    <property type="taxonomic scope" value="Bacteria"/>
</dbReference>
<dbReference type="HOGENOM" id="CLU_104606_2_0_6"/>
<dbReference type="UniPathway" id="UPA00045"/>
<dbReference type="Proteomes" id="UP000001410">
    <property type="component" value="Chromosome"/>
</dbReference>
<dbReference type="GO" id="GO:0042597">
    <property type="term" value="C:periplasmic space"/>
    <property type="evidence" value="ECO:0007669"/>
    <property type="project" value="UniProtKB-SubCell"/>
</dbReference>
<dbReference type="GO" id="GO:0020037">
    <property type="term" value="F:heme binding"/>
    <property type="evidence" value="ECO:0007669"/>
    <property type="project" value="InterPro"/>
</dbReference>
<dbReference type="GO" id="GO:0046872">
    <property type="term" value="F:metal ion binding"/>
    <property type="evidence" value="ECO:0007669"/>
    <property type="project" value="UniProtKB-KW"/>
</dbReference>
<dbReference type="GO" id="GO:0016491">
    <property type="term" value="F:oxidoreductase activity"/>
    <property type="evidence" value="ECO:0007669"/>
    <property type="project" value="TreeGrafter"/>
</dbReference>
<dbReference type="GO" id="GO:0009061">
    <property type="term" value="P:anaerobic respiration"/>
    <property type="evidence" value="ECO:0007669"/>
    <property type="project" value="UniProtKB-ARBA"/>
</dbReference>
<dbReference type="Gene3D" id="3.90.10.10">
    <property type="entry name" value="Cytochrome C3"/>
    <property type="match status" value="2"/>
</dbReference>
<dbReference type="InterPro" id="IPR017564">
    <property type="entry name" value="Cyt_c_NrfB"/>
</dbReference>
<dbReference type="InterPro" id="IPR053875">
    <property type="entry name" value="Cytochrom_c_NrfB-like_dom"/>
</dbReference>
<dbReference type="InterPro" id="IPR036280">
    <property type="entry name" value="Multihaem_cyt_sf"/>
</dbReference>
<dbReference type="InterPro" id="IPR051829">
    <property type="entry name" value="Multiheme_Cytochr_ET"/>
</dbReference>
<dbReference type="NCBIfam" id="TIGR03146">
    <property type="entry name" value="cyt_nit_nrfB"/>
    <property type="match status" value="1"/>
</dbReference>
<dbReference type="NCBIfam" id="NF008659">
    <property type="entry name" value="PRK11659.1"/>
    <property type="match status" value="1"/>
</dbReference>
<dbReference type="PANTHER" id="PTHR35038:SF5">
    <property type="entry name" value="CYTOCHROME C-TYPE PROTEIN NRFB"/>
    <property type="match status" value="1"/>
</dbReference>
<dbReference type="PANTHER" id="PTHR35038">
    <property type="entry name" value="DISSIMILATORY SULFITE REDUCTASE SIRA"/>
    <property type="match status" value="1"/>
</dbReference>
<dbReference type="Pfam" id="PF22678">
    <property type="entry name" value="Cytochrom_c_NrfB-like"/>
    <property type="match status" value="1"/>
</dbReference>
<dbReference type="SUPFAM" id="SSF48695">
    <property type="entry name" value="Multiheme cytochromes"/>
    <property type="match status" value="1"/>
</dbReference>
<dbReference type="PROSITE" id="PS51008">
    <property type="entry name" value="MULTIHEME_CYTC"/>
    <property type="match status" value="1"/>
</dbReference>
<keyword id="KW-0249">Electron transport</keyword>
<keyword id="KW-0349">Heme</keyword>
<keyword id="KW-0408">Iron</keyword>
<keyword id="KW-0479">Metal-binding</keyword>
<keyword id="KW-0574">Periplasm</keyword>
<keyword id="KW-1185">Reference proteome</keyword>
<keyword id="KW-0732">Signal</keyword>
<keyword id="KW-0813">Transport</keyword>